<accession>A6Q688</accession>
<name>RRF_SULNB</name>
<organism>
    <name type="scientific">Sulfurovum sp. (strain NBC37-1)</name>
    <dbReference type="NCBI Taxonomy" id="387093"/>
    <lineage>
        <taxon>Bacteria</taxon>
        <taxon>Pseudomonadati</taxon>
        <taxon>Campylobacterota</taxon>
        <taxon>Epsilonproteobacteria</taxon>
        <taxon>Campylobacterales</taxon>
        <taxon>Sulfurovaceae</taxon>
        <taxon>Sulfurovum</taxon>
    </lineage>
</organism>
<proteinExistence type="inferred from homology"/>
<reference key="1">
    <citation type="journal article" date="2007" name="Proc. Natl. Acad. Sci. U.S.A.">
        <title>Deep-sea vent epsilon-proteobacterial genomes provide insights into emergence of pathogens.</title>
        <authorList>
            <person name="Nakagawa S."/>
            <person name="Takaki Y."/>
            <person name="Shimamura S."/>
            <person name="Reysenbach A.-L."/>
            <person name="Takai K."/>
            <person name="Horikoshi K."/>
        </authorList>
    </citation>
    <scope>NUCLEOTIDE SEQUENCE [LARGE SCALE GENOMIC DNA]</scope>
    <source>
        <strain>NBC37-1</strain>
    </source>
</reference>
<keyword id="KW-0963">Cytoplasm</keyword>
<keyword id="KW-0648">Protein biosynthesis</keyword>
<evidence type="ECO:0000255" key="1">
    <source>
        <dbReference type="HAMAP-Rule" id="MF_00040"/>
    </source>
</evidence>
<sequence length="185" mass="20970">MVNEIFEHTKENMDKSLEALKRDFASLRTGKVTTNIVDNIKVDYYGTPTPLNQVGSVIATDATTISITPWEKNLLSDIERAIQEANIGVNPNNDGDFIKLFFPPMTSEQRQEIVKQAKAMAENARVAIRNIRKDANNKIKKLEKDKEISEDESKRAHDEIQKITDDHIGMVDELFKAKEADILKV</sequence>
<comment type="function">
    <text evidence="1">Responsible for the release of ribosomes from messenger RNA at the termination of protein biosynthesis. May increase the efficiency of translation by recycling ribosomes from one round of translation to another.</text>
</comment>
<comment type="subcellular location">
    <subcellularLocation>
        <location evidence="1">Cytoplasm</location>
    </subcellularLocation>
</comment>
<comment type="similarity">
    <text evidence="1">Belongs to the RRF family.</text>
</comment>
<dbReference type="EMBL" id="AP009179">
    <property type="protein sequence ID" value="BAF70997.1"/>
    <property type="molecule type" value="Genomic_DNA"/>
</dbReference>
<dbReference type="RefSeq" id="WP_011979730.1">
    <property type="nucleotide sequence ID" value="NC_009663.1"/>
</dbReference>
<dbReference type="SMR" id="A6Q688"/>
<dbReference type="STRING" id="387093.SUN_0036"/>
<dbReference type="KEGG" id="sun:SUN_0036"/>
<dbReference type="eggNOG" id="COG0233">
    <property type="taxonomic scope" value="Bacteria"/>
</dbReference>
<dbReference type="HOGENOM" id="CLU_073981_2_0_7"/>
<dbReference type="OrthoDB" id="9804006at2"/>
<dbReference type="Proteomes" id="UP000006378">
    <property type="component" value="Chromosome"/>
</dbReference>
<dbReference type="GO" id="GO:0005829">
    <property type="term" value="C:cytosol"/>
    <property type="evidence" value="ECO:0007669"/>
    <property type="project" value="GOC"/>
</dbReference>
<dbReference type="GO" id="GO:0043023">
    <property type="term" value="F:ribosomal large subunit binding"/>
    <property type="evidence" value="ECO:0007669"/>
    <property type="project" value="TreeGrafter"/>
</dbReference>
<dbReference type="GO" id="GO:0002184">
    <property type="term" value="P:cytoplasmic translational termination"/>
    <property type="evidence" value="ECO:0007669"/>
    <property type="project" value="TreeGrafter"/>
</dbReference>
<dbReference type="CDD" id="cd00520">
    <property type="entry name" value="RRF"/>
    <property type="match status" value="1"/>
</dbReference>
<dbReference type="FunFam" id="1.10.132.20:FF:000001">
    <property type="entry name" value="Ribosome-recycling factor"/>
    <property type="match status" value="1"/>
</dbReference>
<dbReference type="FunFam" id="3.30.1360.40:FF:000001">
    <property type="entry name" value="Ribosome-recycling factor"/>
    <property type="match status" value="1"/>
</dbReference>
<dbReference type="Gene3D" id="3.30.1360.40">
    <property type="match status" value="1"/>
</dbReference>
<dbReference type="Gene3D" id="1.10.132.20">
    <property type="entry name" value="Ribosome-recycling factor"/>
    <property type="match status" value="1"/>
</dbReference>
<dbReference type="HAMAP" id="MF_00040">
    <property type="entry name" value="RRF"/>
    <property type="match status" value="1"/>
</dbReference>
<dbReference type="InterPro" id="IPR002661">
    <property type="entry name" value="Ribosome_recyc_fac"/>
</dbReference>
<dbReference type="InterPro" id="IPR023584">
    <property type="entry name" value="Ribosome_recyc_fac_dom"/>
</dbReference>
<dbReference type="InterPro" id="IPR036191">
    <property type="entry name" value="RRF_sf"/>
</dbReference>
<dbReference type="NCBIfam" id="TIGR00496">
    <property type="entry name" value="frr"/>
    <property type="match status" value="1"/>
</dbReference>
<dbReference type="PANTHER" id="PTHR20982:SF3">
    <property type="entry name" value="MITOCHONDRIAL RIBOSOME RECYCLING FACTOR PSEUDO 1"/>
    <property type="match status" value="1"/>
</dbReference>
<dbReference type="PANTHER" id="PTHR20982">
    <property type="entry name" value="RIBOSOME RECYCLING FACTOR"/>
    <property type="match status" value="1"/>
</dbReference>
<dbReference type="Pfam" id="PF01765">
    <property type="entry name" value="RRF"/>
    <property type="match status" value="1"/>
</dbReference>
<dbReference type="SUPFAM" id="SSF55194">
    <property type="entry name" value="Ribosome recycling factor, RRF"/>
    <property type="match status" value="1"/>
</dbReference>
<protein>
    <recommendedName>
        <fullName evidence="1">Ribosome-recycling factor</fullName>
        <shortName evidence="1">RRF</shortName>
    </recommendedName>
    <alternativeName>
        <fullName evidence="1">Ribosome-releasing factor</fullName>
    </alternativeName>
</protein>
<gene>
    <name evidence="1" type="primary">frr</name>
    <name type="ordered locus">SUN_0036</name>
</gene>
<feature type="chain" id="PRO_1000194960" description="Ribosome-recycling factor">
    <location>
        <begin position="1"/>
        <end position="185"/>
    </location>
</feature>